<dbReference type="EMBL" id="AY261366">
    <property type="status" value="NOT_ANNOTATED_CDS"/>
    <property type="molecule type" value="Genomic_DNA"/>
</dbReference>
<dbReference type="Proteomes" id="UP000000858">
    <property type="component" value="Segment"/>
</dbReference>
<dbReference type="GO" id="GO:0030430">
    <property type="term" value="C:host cell cytoplasm"/>
    <property type="evidence" value="ECO:0007669"/>
    <property type="project" value="UniProtKB-SubCell"/>
</dbReference>
<dbReference type="GO" id="GO:0039548">
    <property type="term" value="P:symbiont-mediated suppression of host cytoplasmic pattern recognition receptor signaling pathway via inhibition of IRF3 activity"/>
    <property type="evidence" value="ECO:0007669"/>
    <property type="project" value="UniProtKB-KW"/>
</dbReference>
<dbReference type="GO" id="GO:0042330">
    <property type="term" value="P:taxis"/>
    <property type="evidence" value="ECO:0007669"/>
    <property type="project" value="InterPro"/>
</dbReference>
<dbReference type="InterPro" id="IPR002595">
    <property type="entry name" value="ASFV_MGF360"/>
</dbReference>
<dbReference type="Pfam" id="PF01671">
    <property type="entry name" value="ASFV_360"/>
    <property type="match status" value="1"/>
</dbReference>
<gene>
    <name type="ordered locus">War-035</name>
</gene>
<proteinExistence type="evidence at protein level"/>
<comment type="function">
    <text evidence="1">Plays a role in virus cell tropism, and may be required for efficient virus replication in macrophages. Also inhibits the host cGAS/STING-mediated type I interferon production by inducing host IRF3 degradation through the proteasome pathway.</text>
</comment>
<comment type="subunit">
    <text evidence="1">Interacts with host IRF3 and TRIM21; these interactions mediates degradation of IRF3 through TRIM21 and ubiquitin-meditated proteolysis.</text>
</comment>
<comment type="subcellular location">
    <subcellularLocation>
        <location evidence="1">Host cytoplasm</location>
    </subcellularLocation>
</comment>
<comment type="similarity">
    <text evidence="2">Belongs to the asfivirus MGF 360 family.</text>
</comment>
<feature type="chain" id="PRO_0000373288" description="Protein MGF 360-14L">
    <location>
        <begin position="1"/>
        <end position="357"/>
    </location>
</feature>
<accession>P0C9Q5</accession>
<organismHost>
    <name type="scientific">Ornithodoros</name>
    <name type="common">relapsing fever ticks</name>
    <dbReference type="NCBI Taxonomy" id="6937"/>
</organismHost>
<organismHost>
    <name type="scientific">Phacochoerus aethiopicus</name>
    <name type="common">Warthog</name>
    <dbReference type="NCBI Taxonomy" id="85517"/>
</organismHost>
<organismHost>
    <name type="scientific">Phacochoerus africanus</name>
    <name type="common">Warthog</name>
    <dbReference type="NCBI Taxonomy" id="41426"/>
</organismHost>
<organismHost>
    <name type="scientific">Potamochoerus larvatus</name>
    <name type="common">Bushpig</name>
    <dbReference type="NCBI Taxonomy" id="273792"/>
</organismHost>
<organismHost>
    <name type="scientific">Sus scrofa</name>
    <name type="common">Pig</name>
    <dbReference type="NCBI Taxonomy" id="9823"/>
</organismHost>
<reference key="1">
    <citation type="submission" date="2003-03" db="EMBL/GenBank/DDBJ databases">
        <title>African swine fever virus genomes.</title>
        <authorList>
            <person name="Kutish G.F."/>
            <person name="Rock D.L."/>
        </authorList>
    </citation>
    <scope>NUCLEOTIDE SEQUENCE [LARGE SCALE GENOMIC DNA]</scope>
</reference>
<reference key="2">
    <citation type="journal article" date="2021" name="Front. Cell. Infect. Microbiol.">
        <title>African Swine Fever Virus MGF360-14L Negatively Regulates Type I Interferon Signaling by Targeting IRF3.</title>
        <authorList>
            <person name="Wang Y."/>
            <person name="Cui S."/>
            <person name="Xin T."/>
            <person name="Wang X."/>
            <person name="Yu H."/>
            <person name="Chen S."/>
            <person name="Jiang Y."/>
            <person name="Gao X."/>
            <person name="Jiang Y."/>
            <person name="Guo X."/>
            <person name="Jia H."/>
            <person name="Zhu H."/>
        </authorList>
    </citation>
    <scope>FUNCTION</scope>
    <scope>INTERACTION WITH HOST IRF3</scope>
    <scope>SUBCELLULAR LOCATION</scope>
</reference>
<name>36014_ASFWA</name>
<organism>
    <name type="scientific">African swine fever virus (isolate Warthog/Namibia/Wart80/1980)</name>
    <name type="common">ASFV</name>
    <dbReference type="NCBI Taxonomy" id="561444"/>
    <lineage>
        <taxon>Viruses</taxon>
        <taxon>Varidnaviria</taxon>
        <taxon>Bamfordvirae</taxon>
        <taxon>Nucleocytoviricota</taxon>
        <taxon>Pokkesviricetes</taxon>
        <taxon>Asfuvirales</taxon>
        <taxon>Asfarviridae</taxon>
        <taxon>Asfivirus</taxon>
        <taxon>African swine fever virus</taxon>
    </lineage>
</organism>
<keyword id="KW-1035">Host cytoplasm</keyword>
<keyword id="KW-0945">Host-virus interaction</keyword>
<keyword id="KW-1090">Inhibition of host innate immune response by virus</keyword>
<keyword id="KW-1092">Inhibition of host IRF3 by virus</keyword>
<keyword id="KW-1113">Inhibition of host RLR pathway by virus</keyword>
<keyword id="KW-0899">Viral immunoevasion</keyword>
<sequence length="357" mass="41471">MLSLQTLAKKVVACNYLSSDYDYMLQRFGLWWDLGPIHLCNNCKQIFSYKHLQCFSEDDLCLEAALVKAVKSDNLELIRLFVDWGANPEYGLIRVPAVHLKRLCTELGGLTPVSEPRLLEILKEVAKLKSCAGVLLGYDMFCHNPLLETVTRTTLDTVTYTCSNIPLTGDTAHHLLTKFWFALALRHNFTKAIHYFYKRHKNHLYWRVACSLYFNNIFDIHELCREKEICISPNLMMKFACLRKKNYAAIYYCYRLGASLDYGMNLSIYNNNTLNMFFCIDLGATDFDRAQRIAHKTYMYNLSNIFLVKQLFSRDVTLALDVTEPQEIYDMLKSYTSKNLKRAEEYLTAHPEIIVID</sequence>
<protein>
    <recommendedName>
        <fullName>Protein MGF 360-14L</fullName>
    </recommendedName>
</protein>
<evidence type="ECO:0000269" key="1">
    <source>
    </source>
</evidence>
<evidence type="ECO:0000305" key="2"/>